<reference key="1">
    <citation type="journal article" date="2002" name="Genome Res.">
        <title>A complete sequence of the T. tengcongensis genome.</title>
        <authorList>
            <person name="Bao Q."/>
            <person name="Tian Y."/>
            <person name="Li W."/>
            <person name="Xu Z."/>
            <person name="Xuan Z."/>
            <person name="Hu S."/>
            <person name="Dong W."/>
            <person name="Yang J."/>
            <person name="Chen Y."/>
            <person name="Xue Y."/>
            <person name="Xu Y."/>
            <person name="Lai X."/>
            <person name="Huang L."/>
            <person name="Dong X."/>
            <person name="Ma Y."/>
            <person name="Ling L."/>
            <person name="Tan H."/>
            <person name="Chen R."/>
            <person name="Wang J."/>
            <person name="Yu J."/>
            <person name="Yang H."/>
        </authorList>
    </citation>
    <scope>NUCLEOTIDE SEQUENCE [LARGE SCALE GENOMIC DNA]</scope>
    <source>
        <strain>DSM 15242 / JCM 11007 / NBRC 100824 / MB4</strain>
    </source>
</reference>
<gene>
    <name evidence="1" type="primary">recA</name>
    <name type="ordered locus">TTE1374</name>
</gene>
<feature type="chain" id="PRO_0000122883" description="Protein RecA">
    <location>
        <begin position="1"/>
        <end position="342"/>
    </location>
</feature>
<feature type="binding site" evidence="1">
    <location>
        <begin position="65"/>
        <end position="72"/>
    </location>
    <ligand>
        <name>ATP</name>
        <dbReference type="ChEBI" id="CHEBI:30616"/>
    </ligand>
</feature>
<organism>
    <name type="scientific">Caldanaerobacter subterraneus subsp. tengcongensis (strain DSM 15242 / JCM 11007 / NBRC 100824 / MB4)</name>
    <name type="common">Thermoanaerobacter tengcongensis</name>
    <dbReference type="NCBI Taxonomy" id="273068"/>
    <lineage>
        <taxon>Bacteria</taxon>
        <taxon>Bacillati</taxon>
        <taxon>Bacillota</taxon>
        <taxon>Clostridia</taxon>
        <taxon>Thermoanaerobacterales</taxon>
        <taxon>Thermoanaerobacteraceae</taxon>
        <taxon>Caldanaerobacter</taxon>
    </lineage>
</organism>
<dbReference type="EMBL" id="AE008691">
    <property type="protein sequence ID" value="AAM24596.1"/>
    <property type="status" value="ALT_FRAME"/>
    <property type="molecule type" value="Genomic_DNA"/>
</dbReference>
<dbReference type="SMR" id="Q8RA55"/>
<dbReference type="STRING" id="273068.TTE1374"/>
<dbReference type="KEGG" id="tte:TTE1374"/>
<dbReference type="eggNOG" id="COG0468">
    <property type="taxonomic scope" value="Bacteria"/>
</dbReference>
<dbReference type="HOGENOM" id="CLU_040469_1_2_9"/>
<dbReference type="Proteomes" id="UP000000555">
    <property type="component" value="Chromosome"/>
</dbReference>
<dbReference type="GO" id="GO:0005829">
    <property type="term" value="C:cytosol"/>
    <property type="evidence" value="ECO:0007669"/>
    <property type="project" value="TreeGrafter"/>
</dbReference>
<dbReference type="GO" id="GO:0005524">
    <property type="term" value="F:ATP binding"/>
    <property type="evidence" value="ECO:0007669"/>
    <property type="project" value="UniProtKB-UniRule"/>
</dbReference>
<dbReference type="GO" id="GO:0016887">
    <property type="term" value="F:ATP hydrolysis activity"/>
    <property type="evidence" value="ECO:0007669"/>
    <property type="project" value="InterPro"/>
</dbReference>
<dbReference type="GO" id="GO:0140664">
    <property type="term" value="F:ATP-dependent DNA damage sensor activity"/>
    <property type="evidence" value="ECO:0007669"/>
    <property type="project" value="InterPro"/>
</dbReference>
<dbReference type="GO" id="GO:0003684">
    <property type="term" value="F:damaged DNA binding"/>
    <property type="evidence" value="ECO:0007669"/>
    <property type="project" value="UniProtKB-UniRule"/>
</dbReference>
<dbReference type="GO" id="GO:0003697">
    <property type="term" value="F:single-stranded DNA binding"/>
    <property type="evidence" value="ECO:0007669"/>
    <property type="project" value="UniProtKB-UniRule"/>
</dbReference>
<dbReference type="GO" id="GO:0006310">
    <property type="term" value="P:DNA recombination"/>
    <property type="evidence" value="ECO:0007669"/>
    <property type="project" value="UniProtKB-UniRule"/>
</dbReference>
<dbReference type="GO" id="GO:0006281">
    <property type="term" value="P:DNA repair"/>
    <property type="evidence" value="ECO:0007669"/>
    <property type="project" value="UniProtKB-UniRule"/>
</dbReference>
<dbReference type="GO" id="GO:0009432">
    <property type="term" value="P:SOS response"/>
    <property type="evidence" value="ECO:0007669"/>
    <property type="project" value="UniProtKB-UniRule"/>
</dbReference>
<dbReference type="CDD" id="cd00983">
    <property type="entry name" value="RecA"/>
    <property type="match status" value="1"/>
</dbReference>
<dbReference type="FunFam" id="3.40.50.300:FF:000087">
    <property type="entry name" value="Recombinase RecA"/>
    <property type="match status" value="1"/>
</dbReference>
<dbReference type="Gene3D" id="3.40.50.300">
    <property type="entry name" value="P-loop containing nucleotide triphosphate hydrolases"/>
    <property type="match status" value="1"/>
</dbReference>
<dbReference type="HAMAP" id="MF_00268">
    <property type="entry name" value="RecA"/>
    <property type="match status" value="1"/>
</dbReference>
<dbReference type="InterPro" id="IPR003593">
    <property type="entry name" value="AAA+_ATPase"/>
</dbReference>
<dbReference type="InterPro" id="IPR013765">
    <property type="entry name" value="DNA_recomb/repair_RecA"/>
</dbReference>
<dbReference type="InterPro" id="IPR020584">
    <property type="entry name" value="DNA_recomb/repair_RecA_CS"/>
</dbReference>
<dbReference type="InterPro" id="IPR027417">
    <property type="entry name" value="P-loop_NTPase"/>
</dbReference>
<dbReference type="InterPro" id="IPR049261">
    <property type="entry name" value="RecA-like_C"/>
</dbReference>
<dbReference type="InterPro" id="IPR049428">
    <property type="entry name" value="RecA-like_N"/>
</dbReference>
<dbReference type="InterPro" id="IPR020588">
    <property type="entry name" value="RecA_ATP-bd"/>
</dbReference>
<dbReference type="InterPro" id="IPR023400">
    <property type="entry name" value="RecA_C_sf"/>
</dbReference>
<dbReference type="InterPro" id="IPR020587">
    <property type="entry name" value="RecA_monomer-monomer_interface"/>
</dbReference>
<dbReference type="NCBIfam" id="TIGR02012">
    <property type="entry name" value="tigrfam_recA"/>
    <property type="match status" value="1"/>
</dbReference>
<dbReference type="PANTHER" id="PTHR45900:SF1">
    <property type="entry name" value="MITOCHONDRIAL DNA REPAIR PROTEIN RECA HOMOLOG-RELATED"/>
    <property type="match status" value="1"/>
</dbReference>
<dbReference type="PANTHER" id="PTHR45900">
    <property type="entry name" value="RECA"/>
    <property type="match status" value="1"/>
</dbReference>
<dbReference type="Pfam" id="PF00154">
    <property type="entry name" value="RecA"/>
    <property type="match status" value="1"/>
</dbReference>
<dbReference type="Pfam" id="PF21096">
    <property type="entry name" value="RecA_C"/>
    <property type="match status" value="1"/>
</dbReference>
<dbReference type="PRINTS" id="PR00142">
    <property type="entry name" value="RECA"/>
</dbReference>
<dbReference type="SMART" id="SM00382">
    <property type="entry name" value="AAA"/>
    <property type="match status" value="1"/>
</dbReference>
<dbReference type="SUPFAM" id="SSF52540">
    <property type="entry name" value="P-loop containing nucleoside triphosphate hydrolases"/>
    <property type="match status" value="1"/>
</dbReference>
<dbReference type="SUPFAM" id="SSF54752">
    <property type="entry name" value="RecA protein, C-terminal domain"/>
    <property type="match status" value="1"/>
</dbReference>
<dbReference type="PROSITE" id="PS00321">
    <property type="entry name" value="RECA_1"/>
    <property type="match status" value="1"/>
</dbReference>
<dbReference type="PROSITE" id="PS50162">
    <property type="entry name" value="RECA_2"/>
    <property type="match status" value="1"/>
</dbReference>
<dbReference type="PROSITE" id="PS50163">
    <property type="entry name" value="RECA_3"/>
    <property type="match status" value="1"/>
</dbReference>
<accession>Q8RA55</accession>
<evidence type="ECO:0000255" key="1">
    <source>
        <dbReference type="HAMAP-Rule" id="MF_00268"/>
    </source>
</evidence>
<evidence type="ECO:0000305" key="2"/>
<sequence length="342" mass="37155">MMIEKQKALEMAISQIERQFGKGAIMRLGDTAKLNVEVIPTGSLELDIALGVGGVPRGRIIEIFGPESSGKTTLALHMIAEAQKIGGTGAFIDAEHALDPVYAKNLGVNIDDLLVAQPDTGEQALEIAEALVRSGAVDIIVIDSVAALVPKAEIEGEMGDSHVGLQARLMSQALRKLAGVTSKSKSIVVFINQLREKVGVMFGNPETTPGGRALKFYATIRLDVRKVDNIKQGNEIVGSRTRVKVVKNKIAPPFKQAEFDIMYGEGISREGSILDLGTALDIIEKSGSWYSYKDIKLGQGRENAKQFLKENKEIAEEIERKIRENFNLAYNKIKSAPDAIVE</sequence>
<comment type="function">
    <text evidence="1">Can catalyze the hydrolysis of ATP in the presence of single-stranded DNA, the ATP-dependent uptake of single-stranded DNA by duplex DNA, and the ATP-dependent hybridization of homologous single-stranded DNAs. It interacts with LexA causing its activation and leading to its autocatalytic cleavage.</text>
</comment>
<comment type="subcellular location">
    <subcellularLocation>
        <location evidence="1">Cytoplasm</location>
    </subcellularLocation>
</comment>
<comment type="similarity">
    <text evidence="1">Belongs to the RecA family.</text>
</comment>
<comment type="sequence caution" evidence="2">
    <conflict type="frameshift">
        <sequence resource="EMBL-CDS" id="AAM24596"/>
    </conflict>
</comment>
<keyword id="KW-0067">ATP-binding</keyword>
<keyword id="KW-0963">Cytoplasm</keyword>
<keyword id="KW-0227">DNA damage</keyword>
<keyword id="KW-0233">DNA recombination</keyword>
<keyword id="KW-0234">DNA repair</keyword>
<keyword id="KW-0238">DNA-binding</keyword>
<keyword id="KW-0547">Nucleotide-binding</keyword>
<keyword id="KW-1185">Reference proteome</keyword>
<keyword id="KW-0742">SOS response</keyword>
<name>RECA_CALS4</name>
<proteinExistence type="inferred from homology"/>
<protein>
    <recommendedName>
        <fullName evidence="1">Protein RecA</fullName>
    </recommendedName>
    <alternativeName>
        <fullName evidence="1">Recombinase A</fullName>
    </alternativeName>
</protein>